<dbReference type="EMBL" id="CP001037">
    <property type="protein sequence ID" value="ACC82750.1"/>
    <property type="molecule type" value="Genomic_DNA"/>
</dbReference>
<dbReference type="RefSeq" id="WP_012410712.1">
    <property type="nucleotide sequence ID" value="NC_010628.1"/>
</dbReference>
<dbReference type="SMR" id="B2ITP2"/>
<dbReference type="STRING" id="63737.Npun_R4377"/>
<dbReference type="EnsemblBacteria" id="ACC82750">
    <property type="protein sequence ID" value="ACC82750"/>
    <property type="gene ID" value="Npun_R4377"/>
</dbReference>
<dbReference type="KEGG" id="npu:Npun_R4377"/>
<dbReference type="eggNOG" id="COG0096">
    <property type="taxonomic scope" value="Bacteria"/>
</dbReference>
<dbReference type="HOGENOM" id="CLU_098428_0_2_3"/>
<dbReference type="OrthoDB" id="9802617at2"/>
<dbReference type="PhylomeDB" id="B2ITP2"/>
<dbReference type="Proteomes" id="UP000001191">
    <property type="component" value="Chromosome"/>
</dbReference>
<dbReference type="GO" id="GO:1990904">
    <property type="term" value="C:ribonucleoprotein complex"/>
    <property type="evidence" value="ECO:0007669"/>
    <property type="project" value="UniProtKB-KW"/>
</dbReference>
<dbReference type="GO" id="GO:0005840">
    <property type="term" value="C:ribosome"/>
    <property type="evidence" value="ECO:0007669"/>
    <property type="project" value="UniProtKB-KW"/>
</dbReference>
<dbReference type="GO" id="GO:0019843">
    <property type="term" value="F:rRNA binding"/>
    <property type="evidence" value="ECO:0007669"/>
    <property type="project" value="UniProtKB-UniRule"/>
</dbReference>
<dbReference type="GO" id="GO:0003735">
    <property type="term" value="F:structural constituent of ribosome"/>
    <property type="evidence" value="ECO:0007669"/>
    <property type="project" value="InterPro"/>
</dbReference>
<dbReference type="GO" id="GO:0006412">
    <property type="term" value="P:translation"/>
    <property type="evidence" value="ECO:0007669"/>
    <property type="project" value="UniProtKB-UniRule"/>
</dbReference>
<dbReference type="FunFam" id="3.30.1370.30:FF:000002">
    <property type="entry name" value="30S ribosomal protein S8"/>
    <property type="match status" value="1"/>
</dbReference>
<dbReference type="FunFam" id="3.30.1490.10:FF:000001">
    <property type="entry name" value="30S ribosomal protein S8"/>
    <property type="match status" value="1"/>
</dbReference>
<dbReference type="Gene3D" id="3.30.1370.30">
    <property type="match status" value="1"/>
</dbReference>
<dbReference type="Gene3D" id="3.30.1490.10">
    <property type="match status" value="1"/>
</dbReference>
<dbReference type="HAMAP" id="MF_01302_B">
    <property type="entry name" value="Ribosomal_uS8_B"/>
    <property type="match status" value="1"/>
</dbReference>
<dbReference type="InterPro" id="IPR000630">
    <property type="entry name" value="Ribosomal_uS8"/>
</dbReference>
<dbReference type="InterPro" id="IPR047863">
    <property type="entry name" value="Ribosomal_uS8_CS"/>
</dbReference>
<dbReference type="InterPro" id="IPR035987">
    <property type="entry name" value="Ribosomal_uS8_sf"/>
</dbReference>
<dbReference type="NCBIfam" id="NF001109">
    <property type="entry name" value="PRK00136.1"/>
    <property type="match status" value="1"/>
</dbReference>
<dbReference type="PANTHER" id="PTHR11758">
    <property type="entry name" value="40S RIBOSOMAL PROTEIN S15A"/>
    <property type="match status" value="1"/>
</dbReference>
<dbReference type="Pfam" id="PF00410">
    <property type="entry name" value="Ribosomal_S8"/>
    <property type="match status" value="1"/>
</dbReference>
<dbReference type="SUPFAM" id="SSF56047">
    <property type="entry name" value="Ribosomal protein S8"/>
    <property type="match status" value="1"/>
</dbReference>
<dbReference type="PROSITE" id="PS00053">
    <property type="entry name" value="RIBOSOMAL_S8"/>
    <property type="match status" value="1"/>
</dbReference>
<sequence>MAANDTIADMLTRIRNANLARHQTTQVPATKMTRSIAKVLREEGFIAEIEEAEEGVKHNLVISLKYKGKNRQPLITALKRVSKPGLRVYSNRKELPRVLGGIGIAIISTSSGIMTDREARRQNLGGEVLCYVW</sequence>
<protein>
    <recommendedName>
        <fullName evidence="1">Small ribosomal subunit protein uS8</fullName>
    </recommendedName>
    <alternativeName>
        <fullName evidence="2">30S ribosomal protein S8</fullName>
    </alternativeName>
</protein>
<reference key="1">
    <citation type="journal article" date="2013" name="Plant Physiol.">
        <title>A Nostoc punctiforme Sugar Transporter Necessary to Establish a Cyanobacterium-Plant Symbiosis.</title>
        <authorList>
            <person name="Ekman M."/>
            <person name="Picossi S."/>
            <person name="Campbell E.L."/>
            <person name="Meeks J.C."/>
            <person name="Flores E."/>
        </authorList>
    </citation>
    <scope>NUCLEOTIDE SEQUENCE [LARGE SCALE GENOMIC DNA]</scope>
    <source>
        <strain>ATCC 29133 / PCC 73102</strain>
    </source>
</reference>
<evidence type="ECO:0000255" key="1">
    <source>
        <dbReference type="HAMAP-Rule" id="MF_01302"/>
    </source>
</evidence>
<evidence type="ECO:0000305" key="2"/>
<name>RS8_NOSP7</name>
<proteinExistence type="inferred from homology"/>
<feature type="chain" id="PRO_1000140586" description="Small ribosomal subunit protein uS8">
    <location>
        <begin position="1"/>
        <end position="133"/>
    </location>
</feature>
<organism>
    <name type="scientific">Nostoc punctiforme (strain ATCC 29133 / PCC 73102)</name>
    <dbReference type="NCBI Taxonomy" id="63737"/>
    <lineage>
        <taxon>Bacteria</taxon>
        <taxon>Bacillati</taxon>
        <taxon>Cyanobacteriota</taxon>
        <taxon>Cyanophyceae</taxon>
        <taxon>Nostocales</taxon>
        <taxon>Nostocaceae</taxon>
        <taxon>Nostoc</taxon>
    </lineage>
</organism>
<accession>B2ITP2</accession>
<keyword id="KW-1185">Reference proteome</keyword>
<keyword id="KW-0687">Ribonucleoprotein</keyword>
<keyword id="KW-0689">Ribosomal protein</keyword>
<keyword id="KW-0694">RNA-binding</keyword>
<keyword id="KW-0699">rRNA-binding</keyword>
<gene>
    <name evidence="1" type="primary">rpsH</name>
    <name evidence="1" type="synonym">rps8</name>
    <name type="ordered locus">Npun_R4377</name>
</gene>
<comment type="function">
    <text evidence="1">One of the primary rRNA binding proteins, it binds directly to 16S rRNA central domain where it helps coordinate assembly of the platform of the 30S subunit.</text>
</comment>
<comment type="subunit">
    <text evidence="1">Part of the 30S ribosomal subunit. Contacts proteins S5 and S12.</text>
</comment>
<comment type="similarity">
    <text evidence="1">Belongs to the universal ribosomal protein uS8 family.</text>
</comment>